<keyword id="KW-1003">Cell membrane</keyword>
<keyword id="KW-0133">Cell shape</keyword>
<keyword id="KW-0961">Cell wall biogenesis/degradation</keyword>
<keyword id="KW-0472">Membrane</keyword>
<keyword id="KW-0573">Peptidoglycan synthesis</keyword>
<keyword id="KW-1185">Reference proteome</keyword>
<keyword id="KW-0812">Transmembrane</keyword>
<keyword id="KW-1133">Transmembrane helix</keyword>
<keyword id="KW-0813">Transport</keyword>
<comment type="function">
    <text evidence="1 6">Involved in peptidoglycan biosynthesis. Transports lipid-linked peptidoglycan precursors from the inner to the outer leaflet of the cytoplasmic membrane. May serve as a defense mechanism against naturally occurring MurJ antagonists.</text>
</comment>
<comment type="pathway">
    <text evidence="1 3">Cell wall biogenesis; peptidoglycan biosynthesis.</text>
</comment>
<comment type="subcellular location">
    <subcellularLocation>
        <location evidence="1 5">Cell membrane</location>
        <topology evidence="1">Multi-pass membrane protein</topology>
    </subcellularLocation>
</comment>
<comment type="induction">
    <text evidence="2 3">Transcribed under partial control of SigM ECF sigma factor (PubMed:17434969, PubMed:25918422). Expression is up-regulated in the absence of MurJ (PubMed:25918422).</text>
</comment>
<comment type="disruption phenotype">
    <text evidence="3">Mutants lacking both murJ and amj have a lethal defect in cell wall synthesis.</text>
</comment>
<comment type="similarity">
    <text evidence="1 5">Belongs to the Amj family.</text>
</comment>
<accession>P96581</accession>
<accession>A7XMW3</accession>
<accession>Q797M7</accession>
<organism>
    <name type="scientific">Bacillus subtilis (strain 168)</name>
    <dbReference type="NCBI Taxonomy" id="224308"/>
    <lineage>
        <taxon>Bacteria</taxon>
        <taxon>Bacillati</taxon>
        <taxon>Bacillota</taxon>
        <taxon>Bacilli</taxon>
        <taxon>Bacillales</taxon>
        <taxon>Bacillaceae</taxon>
        <taxon>Bacillus</taxon>
    </lineage>
</organism>
<protein>
    <recommendedName>
        <fullName evidence="1 5">Lipid II flippase Amj</fullName>
    </recommendedName>
</protein>
<feature type="chain" id="PRO_0000360733" description="Lipid II flippase Amj">
    <location>
        <begin position="1"/>
        <end position="269"/>
    </location>
</feature>
<feature type="transmembrane region" description="Helical" evidence="1">
    <location>
        <begin position="1"/>
        <end position="21"/>
    </location>
</feature>
<feature type="transmembrane region" description="Helical" evidence="1">
    <location>
        <begin position="31"/>
        <end position="51"/>
    </location>
</feature>
<feature type="transmembrane region" description="Helical" evidence="1">
    <location>
        <begin position="84"/>
        <end position="104"/>
    </location>
</feature>
<feature type="transmembrane region" description="Helical" evidence="1">
    <location>
        <begin position="105"/>
        <end position="125"/>
    </location>
</feature>
<feature type="transmembrane region" description="Helical" evidence="1">
    <location>
        <begin position="161"/>
        <end position="181"/>
    </location>
</feature>
<feature type="transmembrane region" description="Helical" evidence="1">
    <location>
        <begin position="192"/>
        <end position="212"/>
    </location>
</feature>
<feature type="transmembrane region" description="Helical" evidence="1">
    <location>
        <begin position="245"/>
        <end position="265"/>
    </location>
</feature>
<name>AMJ_BACSU</name>
<proteinExistence type="evidence at transcript level"/>
<gene>
    <name evidence="1 4" type="primary">amj</name>
    <name type="synonym">ydaH</name>
    <name type="ordered locus">BSU04230</name>
</gene>
<dbReference type="EMBL" id="AB001488">
    <property type="protein sequence ID" value="BAA19261.1"/>
    <property type="molecule type" value="Genomic_DNA"/>
</dbReference>
<dbReference type="EMBL" id="AL009126">
    <property type="protein sequence ID" value="CAB12230.1"/>
    <property type="molecule type" value="Genomic_DNA"/>
</dbReference>
<dbReference type="EMBL" id="EU084745">
    <property type="protein sequence ID" value="ABU88888.1"/>
    <property type="molecule type" value="Genomic_DNA"/>
</dbReference>
<dbReference type="PIR" id="H69768">
    <property type="entry name" value="H69768"/>
</dbReference>
<dbReference type="RefSeq" id="NP_388304.1">
    <property type="nucleotide sequence ID" value="NC_000964.3"/>
</dbReference>
<dbReference type="RefSeq" id="WP_003234394.1">
    <property type="nucleotide sequence ID" value="NZ_OZ025638.1"/>
</dbReference>
<dbReference type="FunCoup" id="P96581">
    <property type="interactions" value="35"/>
</dbReference>
<dbReference type="STRING" id="224308.BSU04230"/>
<dbReference type="PaxDb" id="224308-BSU04230"/>
<dbReference type="EnsemblBacteria" id="CAB12230">
    <property type="protein sequence ID" value="CAB12230"/>
    <property type="gene ID" value="BSU_04230"/>
</dbReference>
<dbReference type="GeneID" id="86875146"/>
<dbReference type="GeneID" id="938243"/>
<dbReference type="KEGG" id="bsu:BSU04230"/>
<dbReference type="PATRIC" id="fig|224308.179.peg.449"/>
<dbReference type="eggNOG" id="ENOG502ZBN3">
    <property type="taxonomic scope" value="Bacteria"/>
</dbReference>
<dbReference type="InParanoid" id="P96581"/>
<dbReference type="OrthoDB" id="7888986at2"/>
<dbReference type="BioCyc" id="BSUB:BSU04230-MONOMER"/>
<dbReference type="UniPathway" id="UPA00219"/>
<dbReference type="Proteomes" id="UP000001570">
    <property type="component" value="Chromosome"/>
</dbReference>
<dbReference type="GO" id="GO:0005886">
    <property type="term" value="C:plasma membrane"/>
    <property type="evidence" value="ECO:0007669"/>
    <property type="project" value="UniProtKB-SubCell"/>
</dbReference>
<dbReference type="GO" id="GO:0015648">
    <property type="term" value="F:lipid-linked peptidoglycan transporter activity"/>
    <property type="evidence" value="ECO:0007669"/>
    <property type="project" value="UniProtKB-UniRule"/>
</dbReference>
<dbReference type="GO" id="GO:0071555">
    <property type="term" value="P:cell wall organization"/>
    <property type="evidence" value="ECO:0007669"/>
    <property type="project" value="UniProtKB-KW"/>
</dbReference>
<dbReference type="GO" id="GO:0009252">
    <property type="term" value="P:peptidoglycan biosynthetic process"/>
    <property type="evidence" value="ECO:0007669"/>
    <property type="project" value="UniProtKB-UniRule"/>
</dbReference>
<dbReference type="GO" id="GO:0008360">
    <property type="term" value="P:regulation of cell shape"/>
    <property type="evidence" value="ECO:0007669"/>
    <property type="project" value="UniProtKB-KW"/>
</dbReference>
<dbReference type="HAMAP" id="MF_02077">
    <property type="entry name" value="Amj_flippase"/>
    <property type="match status" value="1"/>
</dbReference>
<dbReference type="InterPro" id="IPR021260">
    <property type="entry name" value="Amj"/>
</dbReference>
<dbReference type="Pfam" id="PF10997">
    <property type="entry name" value="Amj"/>
    <property type="match status" value="1"/>
</dbReference>
<reference key="1">
    <citation type="submission" date="1997-03" db="EMBL/GenBank/DDBJ databases">
        <title>A 148 kbp sequence of the region between 35 and 47 degree of the Bacillus subtilis genome.</title>
        <authorList>
            <person name="Kasahara Y."/>
            <person name="Nakai S."/>
            <person name="Lee S."/>
            <person name="Sadaie Y."/>
            <person name="Ogasawara N."/>
        </authorList>
    </citation>
    <scope>NUCLEOTIDE SEQUENCE [GENOMIC DNA]</scope>
    <source>
        <strain>168</strain>
    </source>
</reference>
<reference key="2">
    <citation type="journal article" date="1997" name="Nature">
        <title>The complete genome sequence of the Gram-positive bacterium Bacillus subtilis.</title>
        <authorList>
            <person name="Kunst F."/>
            <person name="Ogasawara N."/>
            <person name="Moszer I."/>
            <person name="Albertini A.M."/>
            <person name="Alloni G."/>
            <person name="Azevedo V."/>
            <person name="Bertero M.G."/>
            <person name="Bessieres P."/>
            <person name="Bolotin A."/>
            <person name="Borchert S."/>
            <person name="Borriss R."/>
            <person name="Boursier L."/>
            <person name="Brans A."/>
            <person name="Braun M."/>
            <person name="Brignell S.C."/>
            <person name="Bron S."/>
            <person name="Brouillet S."/>
            <person name="Bruschi C.V."/>
            <person name="Caldwell B."/>
            <person name="Capuano V."/>
            <person name="Carter N.M."/>
            <person name="Choi S.-K."/>
            <person name="Codani J.-J."/>
            <person name="Connerton I.F."/>
            <person name="Cummings N.J."/>
            <person name="Daniel R.A."/>
            <person name="Denizot F."/>
            <person name="Devine K.M."/>
            <person name="Duesterhoeft A."/>
            <person name="Ehrlich S.D."/>
            <person name="Emmerson P.T."/>
            <person name="Entian K.-D."/>
            <person name="Errington J."/>
            <person name="Fabret C."/>
            <person name="Ferrari E."/>
            <person name="Foulger D."/>
            <person name="Fritz C."/>
            <person name="Fujita M."/>
            <person name="Fujita Y."/>
            <person name="Fuma S."/>
            <person name="Galizzi A."/>
            <person name="Galleron N."/>
            <person name="Ghim S.-Y."/>
            <person name="Glaser P."/>
            <person name="Goffeau A."/>
            <person name="Golightly E.J."/>
            <person name="Grandi G."/>
            <person name="Guiseppi G."/>
            <person name="Guy B.J."/>
            <person name="Haga K."/>
            <person name="Haiech J."/>
            <person name="Harwood C.R."/>
            <person name="Henaut A."/>
            <person name="Hilbert H."/>
            <person name="Holsappel S."/>
            <person name="Hosono S."/>
            <person name="Hullo M.-F."/>
            <person name="Itaya M."/>
            <person name="Jones L.-M."/>
            <person name="Joris B."/>
            <person name="Karamata D."/>
            <person name="Kasahara Y."/>
            <person name="Klaerr-Blanchard M."/>
            <person name="Klein C."/>
            <person name="Kobayashi Y."/>
            <person name="Koetter P."/>
            <person name="Koningstein G."/>
            <person name="Krogh S."/>
            <person name="Kumano M."/>
            <person name="Kurita K."/>
            <person name="Lapidus A."/>
            <person name="Lardinois S."/>
            <person name="Lauber J."/>
            <person name="Lazarevic V."/>
            <person name="Lee S.-M."/>
            <person name="Levine A."/>
            <person name="Liu H."/>
            <person name="Masuda S."/>
            <person name="Mauel C."/>
            <person name="Medigue C."/>
            <person name="Medina N."/>
            <person name="Mellado R.P."/>
            <person name="Mizuno M."/>
            <person name="Moestl D."/>
            <person name="Nakai S."/>
            <person name="Noback M."/>
            <person name="Noone D."/>
            <person name="O'Reilly M."/>
            <person name="Ogawa K."/>
            <person name="Ogiwara A."/>
            <person name="Oudega B."/>
            <person name="Park S.-H."/>
            <person name="Parro V."/>
            <person name="Pohl T.M."/>
            <person name="Portetelle D."/>
            <person name="Porwollik S."/>
            <person name="Prescott A.M."/>
            <person name="Presecan E."/>
            <person name="Pujic P."/>
            <person name="Purnelle B."/>
            <person name="Rapoport G."/>
            <person name="Rey M."/>
            <person name="Reynolds S."/>
            <person name="Rieger M."/>
            <person name="Rivolta C."/>
            <person name="Rocha E."/>
            <person name="Roche B."/>
            <person name="Rose M."/>
            <person name="Sadaie Y."/>
            <person name="Sato T."/>
            <person name="Scanlan E."/>
            <person name="Schleich S."/>
            <person name="Schroeter R."/>
            <person name="Scoffone F."/>
            <person name="Sekiguchi J."/>
            <person name="Sekowska A."/>
            <person name="Seror S.J."/>
            <person name="Serror P."/>
            <person name="Shin B.-S."/>
            <person name="Soldo B."/>
            <person name="Sorokin A."/>
            <person name="Tacconi E."/>
            <person name="Takagi T."/>
            <person name="Takahashi H."/>
            <person name="Takemaru K."/>
            <person name="Takeuchi M."/>
            <person name="Tamakoshi A."/>
            <person name="Tanaka T."/>
            <person name="Terpstra P."/>
            <person name="Tognoni A."/>
            <person name="Tosato V."/>
            <person name="Uchiyama S."/>
            <person name="Vandenbol M."/>
            <person name="Vannier F."/>
            <person name="Vassarotti A."/>
            <person name="Viari A."/>
            <person name="Wambutt R."/>
            <person name="Wedler E."/>
            <person name="Wedler H."/>
            <person name="Weitzenegger T."/>
            <person name="Winters P."/>
            <person name="Wipat A."/>
            <person name="Yamamoto H."/>
            <person name="Yamane K."/>
            <person name="Yasumoto K."/>
            <person name="Yata K."/>
            <person name="Yoshida K."/>
            <person name="Yoshikawa H.-F."/>
            <person name="Zumstein E."/>
            <person name="Yoshikawa H."/>
            <person name="Danchin A."/>
        </authorList>
    </citation>
    <scope>NUCLEOTIDE SEQUENCE [LARGE SCALE GENOMIC DNA]</scope>
    <source>
        <strain>168</strain>
    </source>
</reference>
<reference key="3">
    <citation type="journal article" date="2008" name="J. Bacteriol.">
        <title>The origins of 168, W23, and other Bacillus subtilis legacy strains.</title>
        <authorList>
            <person name="Zeigler D.R."/>
            <person name="Pragai Z."/>
            <person name="Rodriguez S."/>
            <person name="Chevreux B."/>
            <person name="Muffler A."/>
            <person name="Albert T."/>
            <person name="Bai R."/>
            <person name="Wyss M."/>
            <person name="Perkins J.B."/>
        </authorList>
    </citation>
    <scope>NUCLEOTIDE SEQUENCE [GENOMIC DNA] OF 112-269</scope>
    <source>
        <strain>168 / PY79</strain>
    </source>
</reference>
<reference key="4">
    <citation type="journal article" date="2007" name="J. Bacteriol.">
        <title>SigM-responsive genes of Bacillus subtilis and their promoters.</title>
        <authorList>
            <person name="Jervis A.J."/>
            <person name="Thackray P.D."/>
            <person name="Houston C.W."/>
            <person name="Horsburgh M.J."/>
            <person name="Moir A."/>
        </authorList>
    </citation>
    <scope>INDUCTION</scope>
    <source>
        <strain>168 / 1604</strain>
    </source>
</reference>
<reference key="5">
    <citation type="journal article" date="2015" name="Proc. Natl. Acad. Sci. U.S.A.">
        <title>MurJ and a novel lipid II flippase are required for cell wall biogenesis in Bacillus subtilis.</title>
        <authorList>
            <person name="Meeske A.J."/>
            <person name="Sham L.T."/>
            <person name="Kimsey H."/>
            <person name="Koo B.M."/>
            <person name="Gross C.A."/>
            <person name="Bernhardt T.G."/>
            <person name="Rudner D.Z."/>
        </authorList>
    </citation>
    <scope>FUNCTION</scope>
    <scope>PATHWAY</scope>
    <scope>INDUCTION</scope>
    <scope>DISRUPTION PHENOTYPE</scope>
</reference>
<sequence>MHVITTQVLFIFCFLLLIHSIETLAYATRLSGARVGFIASALSLFNVMVIVSRMSNMVQQPFTGHLIDDAGKNALAIVGEQFRFLIFGSTVGTILGIILLPSFVALFSRAIIHLAGGGGSVFQVFRKGFSKQGFKNALSYLRLPSISYVKGFHMRLIPKRLFVINMLITSIYTIGVLSALYAGLLAPERSTTAVMASGLINGIATMLLAIFVDPKVSVLADDVAKGKRSYIYLKWTSVTMVTSRVAGTLLAQLMFIPGAYYIAWLTKWF</sequence>
<evidence type="ECO:0000255" key="1">
    <source>
        <dbReference type="HAMAP-Rule" id="MF_02077"/>
    </source>
</evidence>
<evidence type="ECO:0000269" key="2">
    <source>
    </source>
</evidence>
<evidence type="ECO:0000269" key="3">
    <source>
    </source>
</evidence>
<evidence type="ECO:0000303" key="4">
    <source>
    </source>
</evidence>
<evidence type="ECO:0000305" key="5"/>
<evidence type="ECO:0000305" key="6">
    <source>
    </source>
</evidence>